<feature type="chain" id="PRO_0000182016" description="Probable lipid II flippase MurJ">
    <location>
        <begin position="1"/>
        <end position="473"/>
    </location>
</feature>
<feature type="transmembrane region" description="Helical" evidence="1">
    <location>
        <begin position="31"/>
        <end position="51"/>
    </location>
</feature>
<feature type="transmembrane region" description="Helical" evidence="1">
    <location>
        <begin position="90"/>
        <end position="110"/>
    </location>
</feature>
<feature type="transmembrane region" description="Helical" evidence="1">
    <location>
        <begin position="125"/>
        <end position="145"/>
    </location>
</feature>
<feature type="transmembrane region" description="Helical" evidence="1">
    <location>
        <begin position="153"/>
        <end position="173"/>
    </location>
</feature>
<feature type="transmembrane region" description="Helical" evidence="1">
    <location>
        <begin position="177"/>
        <end position="197"/>
    </location>
</feature>
<feature type="transmembrane region" description="Helical" evidence="1">
    <location>
        <begin position="215"/>
        <end position="235"/>
    </location>
</feature>
<feature type="transmembrane region" description="Helical" evidence="1">
    <location>
        <begin position="253"/>
        <end position="273"/>
    </location>
</feature>
<feature type="transmembrane region" description="Helical" evidence="1">
    <location>
        <begin position="300"/>
        <end position="320"/>
    </location>
</feature>
<feature type="transmembrane region" description="Helical" evidence="1">
    <location>
        <begin position="327"/>
        <end position="347"/>
    </location>
</feature>
<feature type="transmembrane region" description="Helical" evidence="1">
    <location>
        <begin position="360"/>
        <end position="380"/>
    </location>
</feature>
<feature type="transmembrane region" description="Helical" evidence="1">
    <location>
        <begin position="382"/>
        <end position="402"/>
    </location>
</feature>
<feature type="transmembrane region" description="Helical" evidence="1">
    <location>
        <begin position="414"/>
        <end position="434"/>
    </location>
</feature>
<feature type="transmembrane region" description="Helical" evidence="1">
    <location>
        <begin position="439"/>
        <end position="459"/>
    </location>
</feature>
<organism>
    <name type="scientific">Thermotoga maritima (strain ATCC 43589 / DSM 3109 / JCM 10099 / NBRC 100826 / MSB8)</name>
    <dbReference type="NCBI Taxonomy" id="243274"/>
    <lineage>
        <taxon>Bacteria</taxon>
        <taxon>Thermotogati</taxon>
        <taxon>Thermotogota</taxon>
        <taxon>Thermotogae</taxon>
        <taxon>Thermotogales</taxon>
        <taxon>Thermotogaceae</taxon>
        <taxon>Thermotoga</taxon>
    </lineage>
</organism>
<protein>
    <recommendedName>
        <fullName evidence="1">Probable lipid II flippase MurJ</fullName>
    </recommendedName>
</protein>
<name>MURJ_THEMA</name>
<comment type="function">
    <text evidence="1">Involved in peptidoglycan biosynthesis. Transports lipid-linked peptidoglycan precursors from the inner to the outer leaflet of the cytoplasmic membrane.</text>
</comment>
<comment type="pathway">
    <text evidence="1">Cell wall biogenesis; peptidoglycan biosynthesis.</text>
</comment>
<comment type="subcellular location">
    <subcellularLocation>
        <location evidence="1">Cell inner membrane</location>
        <topology evidence="1">Multi-pass membrane protein</topology>
    </subcellularLocation>
</comment>
<comment type="similarity">
    <text evidence="1">Belongs to the MurJ/MviN family.</text>
</comment>
<gene>
    <name evidence="1" type="primary">murJ</name>
    <name type="synonym">mviN</name>
    <name type="ordered locus">TM_0086</name>
</gene>
<dbReference type="EMBL" id="AE000512">
    <property type="protein sequence ID" value="AAD35180.1"/>
    <property type="molecule type" value="Genomic_DNA"/>
</dbReference>
<dbReference type="PIR" id="H72419">
    <property type="entry name" value="H72419"/>
</dbReference>
<dbReference type="RefSeq" id="NP_227902.1">
    <property type="nucleotide sequence ID" value="NC_000853.1"/>
</dbReference>
<dbReference type="RefSeq" id="WP_004082614.1">
    <property type="nucleotide sequence ID" value="NC_000853.1"/>
</dbReference>
<dbReference type="SMR" id="Q9WXU1"/>
<dbReference type="FunCoup" id="Q9WXU1">
    <property type="interactions" value="236"/>
</dbReference>
<dbReference type="STRING" id="243274.TM_0086"/>
<dbReference type="PaxDb" id="243274-THEMA_04375"/>
<dbReference type="EnsemblBacteria" id="AAD35180">
    <property type="protein sequence ID" value="AAD35180"/>
    <property type="gene ID" value="TM_0086"/>
</dbReference>
<dbReference type="KEGG" id="tma:TM0086"/>
<dbReference type="KEGG" id="tmi:THEMA_04375"/>
<dbReference type="KEGG" id="tmm:Tmari_0083"/>
<dbReference type="KEGG" id="tmw:THMA_0082"/>
<dbReference type="eggNOG" id="COG0728">
    <property type="taxonomic scope" value="Bacteria"/>
</dbReference>
<dbReference type="InParanoid" id="Q9WXU1"/>
<dbReference type="OrthoDB" id="9804143at2"/>
<dbReference type="UniPathway" id="UPA00219"/>
<dbReference type="Proteomes" id="UP000008183">
    <property type="component" value="Chromosome"/>
</dbReference>
<dbReference type="GO" id="GO:0005886">
    <property type="term" value="C:plasma membrane"/>
    <property type="evidence" value="ECO:0000318"/>
    <property type="project" value="GO_Central"/>
</dbReference>
<dbReference type="GO" id="GO:0015648">
    <property type="term" value="F:lipid-linked peptidoglycan transporter activity"/>
    <property type="evidence" value="ECO:0000318"/>
    <property type="project" value="GO_Central"/>
</dbReference>
<dbReference type="GO" id="GO:0071555">
    <property type="term" value="P:cell wall organization"/>
    <property type="evidence" value="ECO:0007669"/>
    <property type="project" value="UniProtKB-KW"/>
</dbReference>
<dbReference type="GO" id="GO:0034204">
    <property type="term" value="P:lipid translocation"/>
    <property type="evidence" value="ECO:0000318"/>
    <property type="project" value="GO_Central"/>
</dbReference>
<dbReference type="GO" id="GO:0015836">
    <property type="term" value="P:lipid-linked peptidoglycan transport"/>
    <property type="evidence" value="ECO:0000318"/>
    <property type="project" value="GO_Central"/>
</dbReference>
<dbReference type="GO" id="GO:0009252">
    <property type="term" value="P:peptidoglycan biosynthetic process"/>
    <property type="evidence" value="ECO:0000318"/>
    <property type="project" value="GO_Central"/>
</dbReference>
<dbReference type="GO" id="GO:0008360">
    <property type="term" value="P:regulation of cell shape"/>
    <property type="evidence" value="ECO:0007669"/>
    <property type="project" value="UniProtKB-KW"/>
</dbReference>
<dbReference type="CDD" id="cd13123">
    <property type="entry name" value="MATE_MurJ_like"/>
    <property type="match status" value="1"/>
</dbReference>
<dbReference type="HAMAP" id="MF_02078">
    <property type="entry name" value="MurJ_MviN"/>
    <property type="match status" value="1"/>
</dbReference>
<dbReference type="InterPro" id="IPR051050">
    <property type="entry name" value="Lipid_II_flippase_MurJ/MviN"/>
</dbReference>
<dbReference type="InterPro" id="IPR004268">
    <property type="entry name" value="MurJ"/>
</dbReference>
<dbReference type="NCBIfam" id="TIGR01695">
    <property type="entry name" value="murJ_mviN"/>
    <property type="match status" value="1"/>
</dbReference>
<dbReference type="PANTHER" id="PTHR47019">
    <property type="entry name" value="LIPID II FLIPPASE MURJ"/>
    <property type="match status" value="1"/>
</dbReference>
<dbReference type="PANTHER" id="PTHR47019:SF1">
    <property type="entry name" value="LIPID II FLIPPASE MURJ"/>
    <property type="match status" value="1"/>
</dbReference>
<dbReference type="Pfam" id="PF03023">
    <property type="entry name" value="MurJ"/>
    <property type="match status" value="1"/>
</dbReference>
<dbReference type="PIRSF" id="PIRSF002869">
    <property type="entry name" value="MviN"/>
    <property type="match status" value="1"/>
</dbReference>
<dbReference type="PRINTS" id="PR01806">
    <property type="entry name" value="VIRFACTRMVIN"/>
</dbReference>
<proteinExistence type="inferred from homology"/>
<evidence type="ECO:0000255" key="1">
    <source>
        <dbReference type="HAMAP-Rule" id="MF_02078"/>
    </source>
</evidence>
<reference key="1">
    <citation type="journal article" date="1999" name="Nature">
        <title>Evidence for lateral gene transfer between Archaea and Bacteria from genome sequence of Thermotoga maritima.</title>
        <authorList>
            <person name="Nelson K.E."/>
            <person name="Clayton R.A."/>
            <person name="Gill S.R."/>
            <person name="Gwinn M.L."/>
            <person name="Dodson R.J."/>
            <person name="Haft D.H."/>
            <person name="Hickey E.K."/>
            <person name="Peterson J.D."/>
            <person name="Nelson W.C."/>
            <person name="Ketchum K.A."/>
            <person name="McDonald L.A."/>
            <person name="Utterback T.R."/>
            <person name="Malek J.A."/>
            <person name="Linher K.D."/>
            <person name="Garrett M.M."/>
            <person name="Stewart A.M."/>
            <person name="Cotton M.D."/>
            <person name="Pratt M.S."/>
            <person name="Phillips C.A."/>
            <person name="Richardson D.L."/>
            <person name="Heidelberg J.F."/>
            <person name="Sutton G.G."/>
            <person name="Fleischmann R.D."/>
            <person name="Eisen J.A."/>
            <person name="White O."/>
            <person name="Salzberg S.L."/>
            <person name="Smith H.O."/>
            <person name="Venter J.C."/>
            <person name="Fraser C.M."/>
        </authorList>
    </citation>
    <scope>NUCLEOTIDE SEQUENCE [LARGE SCALE GENOMIC DNA]</scope>
    <source>
        <strain>ATCC 43589 / DSM 3109 / JCM 10099 / NBRC 100826 / MSB8</strain>
    </source>
</reference>
<keyword id="KW-0997">Cell inner membrane</keyword>
<keyword id="KW-1003">Cell membrane</keyword>
<keyword id="KW-0133">Cell shape</keyword>
<keyword id="KW-0961">Cell wall biogenesis/degradation</keyword>
<keyword id="KW-0472">Membrane</keyword>
<keyword id="KW-0573">Peptidoglycan synthesis</keyword>
<keyword id="KW-1185">Reference proteome</keyword>
<keyword id="KW-0812">Transmembrane</keyword>
<keyword id="KW-1133">Transmembrane helix</keyword>
<keyword id="KW-0813">Transport</keyword>
<sequence length="473" mass="51850">MSSIKKTLAFSLGTFFSRITGLVRDIILAKTFGASSTLDAYYVSIVFPFFLRRTFAEGAMSSAFMAIYKKLKNKEEKAQFTSAVLTSLGLVTLLIVFLSEVFPYFMASIFATGADEEVKSLAADLIRLTAPFITIVFVWAVFYSVHNASHRYFLPALTPMFSNVGVIVGCLFGDVRWAAAGFTIGGLAALLVLLPFGKFRYRPTFKGLGEFYRLFFGTFMTMAVSQVTTLIDVNVASFLDPGSLSLIQLSSRLYQLPLGIFGVAVSTVALSTLSESEGDFHENLKDFISKSLFLTLPSSIGLMALSERIISLLFGYGAFTHEDVKKSAQILFMYAIGLCFVSLFNLLSRAYHASKEVKTPFFATLLVSAVNISLDVILGFTMGASGIALATSVSYIAGFVFLTLRMKPSFDKKIFKISLASAVMGTVILLLRGSFKGNLGTIFLVLIGVFVYVLFSKLLKIEELEEILRRGSH</sequence>
<accession>Q9WXU1</accession>